<geneLocation type="plasmid">
    <name>sym pNGR234b</name>
</geneLocation>
<reference key="1">
    <citation type="journal article" date="2004" name="J. Bacteriol.">
        <title>An evolutionary hot spot: the pNGR234b replicon of Rhizobium sp. strain NGR234.</title>
        <authorList>
            <person name="Streit W.R."/>
            <person name="Schmitz R.A."/>
            <person name="Perret X."/>
            <person name="Staehelin C."/>
            <person name="Deakin W.J."/>
            <person name="Raasch C."/>
            <person name="Liesegang H."/>
            <person name="Broughton W.J."/>
        </authorList>
    </citation>
    <scope>NUCLEOTIDE SEQUENCE [LARGE SCALE GENOMIC DNA]</scope>
    <source>
        <strain>NBRC 101917 / NGR234</strain>
    </source>
</reference>
<reference key="2">
    <citation type="journal article" date="2009" name="Appl. Environ. Microbiol.">
        <title>Rhizobium sp. strain NGR234 possesses a remarkable number of secretion systems.</title>
        <authorList>
            <person name="Schmeisser C."/>
            <person name="Liesegang H."/>
            <person name="Krysciak D."/>
            <person name="Bakkou N."/>
            <person name="Le Quere A."/>
            <person name="Wollherr A."/>
            <person name="Heinemeyer I."/>
            <person name="Morgenstern B."/>
            <person name="Pommerening-Roeser A."/>
            <person name="Flores M."/>
            <person name="Palacios R."/>
            <person name="Brenner S."/>
            <person name="Gottschalk G."/>
            <person name="Schmitz R.A."/>
            <person name="Broughton W.J."/>
            <person name="Perret X."/>
            <person name="Strittmatter A.W."/>
            <person name="Streit W.R."/>
        </authorList>
    </citation>
    <scope>NUCLEOTIDE SEQUENCE [LARGE SCALE GENOMIC DNA]</scope>
    <source>
        <strain>NBRC 101917 / NGR234</strain>
    </source>
</reference>
<comment type="function">
    <text evidence="1">Together with its co-chaperonin GroES, plays an essential role in assisting protein folding. The GroEL-GroES system forms a nano-cage that allows encapsulation of the non-native substrate proteins and provides a physical environment optimized to promote and accelerate protein folding.</text>
</comment>
<comment type="catalytic activity">
    <reaction evidence="1">
        <text>ATP + H2O + a folded polypeptide = ADP + phosphate + an unfolded polypeptide.</text>
        <dbReference type="EC" id="5.6.1.7"/>
    </reaction>
</comment>
<comment type="subunit">
    <text evidence="1">Forms a cylinder of 14 subunits composed of two heptameric rings stacked back-to-back. Interacts with the co-chaperonin GroES.</text>
</comment>
<comment type="subcellular location">
    <subcellularLocation>
        <location evidence="1">Cytoplasm</location>
    </subcellularLocation>
</comment>
<comment type="similarity">
    <text evidence="1">Belongs to the chaperonin (HSP60) family.</text>
</comment>
<feature type="chain" id="PRO_0000332058" description="Chaperonin GroEL 2">
    <location>
        <begin position="1"/>
        <end position="542"/>
    </location>
</feature>
<feature type="binding site" evidence="1">
    <location>
        <begin position="30"/>
        <end position="33"/>
    </location>
    <ligand>
        <name>ATP</name>
        <dbReference type="ChEBI" id="CHEBI:30616"/>
    </ligand>
</feature>
<feature type="binding site" evidence="1">
    <location>
        <position position="51"/>
    </location>
    <ligand>
        <name>ATP</name>
        <dbReference type="ChEBI" id="CHEBI:30616"/>
    </ligand>
</feature>
<feature type="binding site" evidence="1">
    <location>
        <begin position="87"/>
        <end position="91"/>
    </location>
    <ligand>
        <name>ATP</name>
        <dbReference type="ChEBI" id="CHEBI:30616"/>
    </ligand>
</feature>
<feature type="binding site" evidence="1">
    <location>
        <position position="415"/>
    </location>
    <ligand>
        <name>ATP</name>
        <dbReference type="ChEBI" id="CHEBI:30616"/>
    </ligand>
</feature>
<feature type="binding site" evidence="1">
    <location>
        <position position="496"/>
    </location>
    <ligand>
        <name>ATP</name>
        <dbReference type="ChEBI" id="CHEBI:30616"/>
    </ligand>
</feature>
<dbReference type="EC" id="5.6.1.7" evidence="1"/>
<dbReference type="EMBL" id="AY316747">
    <property type="protein sequence ID" value="AAQ87433.1"/>
    <property type="molecule type" value="Genomic_DNA"/>
</dbReference>
<dbReference type="EMBL" id="CP000874">
    <property type="protein sequence ID" value="ACP21972.1"/>
    <property type="molecule type" value="Genomic_DNA"/>
</dbReference>
<dbReference type="RefSeq" id="WP_012706571.1">
    <property type="nucleotide sequence ID" value="NC_012586.1"/>
</dbReference>
<dbReference type="RefSeq" id="YP_002822725.1">
    <property type="nucleotide sequence ID" value="NC_012586.1"/>
</dbReference>
<dbReference type="SMR" id="Q6W1D5"/>
<dbReference type="STRING" id="394.NGR_c09450"/>
<dbReference type="KEGG" id="rhi:NGR_b05100"/>
<dbReference type="PATRIC" id="fig|394.7.peg.953"/>
<dbReference type="HOGENOM" id="CLU_016503_3_0_5"/>
<dbReference type="OrthoDB" id="9766614at2"/>
<dbReference type="Proteomes" id="UP000001054">
    <property type="component" value="Plasmid pNGR234b"/>
</dbReference>
<dbReference type="GO" id="GO:0005737">
    <property type="term" value="C:cytoplasm"/>
    <property type="evidence" value="ECO:0007669"/>
    <property type="project" value="UniProtKB-SubCell"/>
</dbReference>
<dbReference type="GO" id="GO:0005524">
    <property type="term" value="F:ATP binding"/>
    <property type="evidence" value="ECO:0007669"/>
    <property type="project" value="UniProtKB-UniRule"/>
</dbReference>
<dbReference type="GO" id="GO:0140662">
    <property type="term" value="F:ATP-dependent protein folding chaperone"/>
    <property type="evidence" value="ECO:0007669"/>
    <property type="project" value="InterPro"/>
</dbReference>
<dbReference type="GO" id="GO:0016853">
    <property type="term" value="F:isomerase activity"/>
    <property type="evidence" value="ECO:0007669"/>
    <property type="project" value="UniProtKB-KW"/>
</dbReference>
<dbReference type="GO" id="GO:0051082">
    <property type="term" value="F:unfolded protein binding"/>
    <property type="evidence" value="ECO:0007669"/>
    <property type="project" value="UniProtKB-UniRule"/>
</dbReference>
<dbReference type="GO" id="GO:0042026">
    <property type="term" value="P:protein refolding"/>
    <property type="evidence" value="ECO:0007669"/>
    <property type="project" value="UniProtKB-UniRule"/>
</dbReference>
<dbReference type="CDD" id="cd03344">
    <property type="entry name" value="GroEL"/>
    <property type="match status" value="1"/>
</dbReference>
<dbReference type="FunFam" id="1.10.560.10:FF:000001">
    <property type="entry name" value="60 kDa chaperonin"/>
    <property type="match status" value="1"/>
</dbReference>
<dbReference type="FunFam" id="3.50.7.10:FF:000001">
    <property type="entry name" value="60 kDa chaperonin"/>
    <property type="match status" value="1"/>
</dbReference>
<dbReference type="Gene3D" id="3.50.7.10">
    <property type="entry name" value="GroEL"/>
    <property type="match status" value="1"/>
</dbReference>
<dbReference type="Gene3D" id="1.10.560.10">
    <property type="entry name" value="GroEL-like equatorial domain"/>
    <property type="match status" value="1"/>
</dbReference>
<dbReference type="Gene3D" id="3.30.260.10">
    <property type="entry name" value="TCP-1-like chaperonin intermediate domain"/>
    <property type="match status" value="1"/>
</dbReference>
<dbReference type="HAMAP" id="MF_00600">
    <property type="entry name" value="CH60"/>
    <property type="match status" value="1"/>
</dbReference>
<dbReference type="InterPro" id="IPR018370">
    <property type="entry name" value="Chaperonin_Cpn60_CS"/>
</dbReference>
<dbReference type="InterPro" id="IPR001844">
    <property type="entry name" value="Cpn60/GroEL"/>
</dbReference>
<dbReference type="InterPro" id="IPR002423">
    <property type="entry name" value="Cpn60/GroEL/TCP-1"/>
</dbReference>
<dbReference type="InterPro" id="IPR027409">
    <property type="entry name" value="GroEL-like_apical_dom_sf"/>
</dbReference>
<dbReference type="InterPro" id="IPR027413">
    <property type="entry name" value="GROEL-like_equatorial_sf"/>
</dbReference>
<dbReference type="InterPro" id="IPR027410">
    <property type="entry name" value="TCP-1-like_intermed_sf"/>
</dbReference>
<dbReference type="NCBIfam" id="TIGR02348">
    <property type="entry name" value="GroEL"/>
    <property type="match status" value="1"/>
</dbReference>
<dbReference type="NCBIfam" id="NF000592">
    <property type="entry name" value="PRK00013.1"/>
    <property type="match status" value="1"/>
</dbReference>
<dbReference type="NCBIfam" id="NF009487">
    <property type="entry name" value="PRK12849.1"/>
    <property type="match status" value="1"/>
</dbReference>
<dbReference type="NCBIfam" id="NF009488">
    <property type="entry name" value="PRK12850.1"/>
    <property type="match status" value="1"/>
</dbReference>
<dbReference type="NCBIfam" id="NF009489">
    <property type="entry name" value="PRK12851.1"/>
    <property type="match status" value="1"/>
</dbReference>
<dbReference type="PANTHER" id="PTHR45633">
    <property type="entry name" value="60 KDA HEAT SHOCK PROTEIN, MITOCHONDRIAL"/>
    <property type="match status" value="1"/>
</dbReference>
<dbReference type="Pfam" id="PF00118">
    <property type="entry name" value="Cpn60_TCP1"/>
    <property type="match status" value="1"/>
</dbReference>
<dbReference type="PRINTS" id="PR00298">
    <property type="entry name" value="CHAPERONIN60"/>
</dbReference>
<dbReference type="SUPFAM" id="SSF52029">
    <property type="entry name" value="GroEL apical domain-like"/>
    <property type="match status" value="1"/>
</dbReference>
<dbReference type="SUPFAM" id="SSF48592">
    <property type="entry name" value="GroEL equatorial domain-like"/>
    <property type="match status" value="1"/>
</dbReference>
<dbReference type="SUPFAM" id="SSF54849">
    <property type="entry name" value="GroEL-intermediate domain like"/>
    <property type="match status" value="1"/>
</dbReference>
<dbReference type="PROSITE" id="PS00296">
    <property type="entry name" value="CHAPERONINS_CPN60"/>
    <property type="match status" value="1"/>
</dbReference>
<proteinExistence type="inferred from homology"/>
<gene>
    <name evidence="1" type="primary">groEL2</name>
    <name evidence="1" type="synonym">groL2</name>
    <name type="ordered locus">NGR_b05100</name>
    <name type="ORF">RNGR00307</name>
</gene>
<protein>
    <recommendedName>
        <fullName evidence="1">Chaperonin GroEL 2</fullName>
        <ecNumber evidence="1">5.6.1.7</ecNumber>
    </recommendedName>
    <alternativeName>
        <fullName evidence="1">60 kDa chaperonin 2</fullName>
    </alternativeName>
    <alternativeName>
        <fullName evidence="1">Chaperonin-60 2</fullName>
        <shortName evidence="1">Cpn60 2</shortName>
    </alternativeName>
</protein>
<keyword id="KW-0067">ATP-binding</keyword>
<keyword id="KW-0143">Chaperone</keyword>
<keyword id="KW-0963">Cytoplasm</keyword>
<keyword id="KW-0413">Isomerase</keyword>
<keyword id="KW-0547">Nucleotide-binding</keyword>
<keyword id="KW-0614">Plasmid</keyword>
<keyword id="KW-1185">Reference proteome</keyword>
<sequence length="542" mass="58238">MAAKEVRFHTEAREKMLRGVDILANAVKVTLGPKGRNVVLDKSFGAPRITKDGVTVAKEIELEDKFENMGAQMVREVASKTSDIAGDGTTTATVLAQAIVKEGAKAVASGMNPMDLKRGVDKAVDAVVEELRRNARKVTKNDEIAQVGTISANGDTEIGRFLAEAMEKVGNEGVITVEEAKTAVTELEVVEGMQFDRGYLSPYFVTNPDKMRVELEEPYVLIHEKKLSNLQALLPVLESVVQSGKPLLIIAEDVEGEALATLVVNKLRGGLKVAAVKAPGFGDRRKAMLEDIAILTGGTAISEDLGIKLENVTLDMLGRAKKVVVEKENTTIVDGAGSKTEIEGRVAQIKAQIEETTSDYDREKLQERLAKLAGGVAVIRVGGSTEVEVKERKDRVDDAMHATRAAVEEGVLPGGGVALLRAVKALDRVQTENPDQRHGIEIVRRAIEAPVRQIAENAGAEGSIIVGKLREKTEFGYGWNAQTNEFGDLFEQGVIDPVKVVRTALQDAASVAGLLITTEAMVAEKPKKEAPVPPMPPGGMDF</sequence>
<organism>
    <name type="scientific">Sinorhizobium fredii (strain NBRC 101917 / NGR234)</name>
    <dbReference type="NCBI Taxonomy" id="394"/>
    <lineage>
        <taxon>Bacteria</taxon>
        <taxon>Pseudomonadati</taxon>
        <taxon>Pseudomonadota</taxon>
        <taxon>Alphaproteobacteria</taxon>
        <taxon>Hyphomicrobiales</taxon>
        <taxon>Rhizobiaceae</taxon>
        <taxon>Sinorhizobium/Ensifer group</taxon>
        <taxon>Sinorhizobium</taxon>
    </lineage>
</organism>
<accession>Q6W1D5</accession>
<accession>C3KPG4</accession>
<name>CH602_SINFN</name>
<evidence type="ECO:0000255" key="1">
    <source>
        <dbReference type="HAMAP-Rule" id="MF_00600"/>
    </source>
</evidence>